<dbReference type="EMBL" id="CP001213">
    <property type="protein sequence ID" value="ACL28590.1"/>
    <property type="molecule type" value="Genomic_DNA"/>
</dbReference>
<dbReference type="RefSeq" id="WP_004268422.1">
    <property type="nucleotide sequence ID" value="NC_011835.1"/>
</dbReference>
<dbReference type="SMR" id="B8DVT9"/>
<dbReference type="STRING" id="442563.BLA_0288"/>
<dbReference type="GeneID" id="29695626"/>
<dbReference type="KEGG" id="bla:BLA_0288"/>
<dbReference type="HOGENOM" id="CLU_061463_3_0_11"/>
<dbReference type="Proteomes" id="UP000002456">
    <property type="component" value="Chromosome"/>
</dbReference>
<dbReference type="GO" id="GO:0005737">
    <property type="term" value="C:cytoplasm"/>
    <property type="evidence" value="ECO:0007669"/>
    <property type="project" value="UniProtKB-ARBA"/>
</dbReference>
<dbReference type="GO" id="GO:1990904">
    <property type="term" value="C:ribonucleoprotein complex"/>
    <property type="evidence" value="ECO:0007669"/>
    <property type="project" value="UniProtKB-KW"/>
</dbReference>
<dbReference type="GO" id="GO:0005840">
    <property type="term" value="C:ribosome"/>
    <property type="evidence" value="ECO:0007669"/>
    <property type="project" value="UniProtKB-KW"/>
</dbReference>
<dbReference type="GO" id="GO:0019843">
    <property type="term" value="F:rRNA binding"/>
    <property type="evidence" value="ECO:0007669"/>
    <property type="project" value="UniProtKB-UniRule"/>
</dbReference>
<dbReference type="GO" id="GO:0003735">
    <property type="term" value="F:structural constituent of ribosome"/>
    <property type="evidence" value="ECO:0007669"/>
    <property type="project" value="InterPro"/>
</dbReference>
<dbReference type="GO" id="GO:0006412">
    <property type="term" value="P:translation"/>
    <property type="evidence" value="ECO:0007669"/>
    <property type="project" value="UniProtKB-UniRule"/>
</dbReference>
<dbReference type="HAMAP" id="MF_01363">
    <property type="entry name" value="Ribosomal_bL21"/>
    <property type="match status" value="1"/>
</dbReference>
<dbReference type="InterPro" id="IPR028909">
    <property type="entry name" value="bL21-like"/>
</dbReference>
<dbReference type="InterPro" id="IPR036164">
    <property type="entry name" value="bL21-like_sf"/>
</dbReference>
<dbReference type="InterPro" id="IPR001787">
    <property type="entry name" value="Ribosomal_bL21"/>
</dbReference>
<dbReference type="InterPro" id="IPR018258">
    <property type="entry name" value="Ribosomal_bL21_CS"/>
</dbReference>
<dbReference type="NCBIfam" id="TIGR00061">
    <property type="entry name" value="L21"/>
    <property type="match status" value="1"/>
</dbReference>
<dbReference type="PANTHER" id="PTHR21349">
    <property type="entry name" value="50S RIBOSOMAL PROTEIN L21"/>
    <property type="match status" value="1"/>
</dbReference>
<dbReference type="PANTHER" id="PTHR21349:SF0">
    <property type="entry name" value="LARGE RIBOSOMAL SUBUNIT PROTEIN BL21M"/>
    <property type="match status" value="1"/>
</dbReference>
<dbReference type="Pfam" id="PF00829">
    <property type="entry name" value="Ribosomal_L21p"/>
    <property type="match status" value="1"/>
</dbReference>
<dbReference type="SUPFAM" id="SSF141091">
    <property type="entry name" value="L21p-like"/>
    <property type="match status" value="1"/>
</dbReference>
<dbReference type="PROSITE" id="PS01169">
    <property type="entry name" value="RIBOSOMAL_L21"/>
    <property type="match status" value="1"/>
</dbReference>
<comment type="function">
    <text evidence="1">This protein binds to 23S rRNA in the presence of protein L20.</text>
</comment>
<comment type="subunit">
    <text evidence="1">Part of the 50S ribosomal subunit. Contacts protein L20.</text>
</comment>
<comment type="similarity">
    <text evidence="1">Belongs to the bacterial ribosomal protein bL21 family.</text>
</comment>
<proteinExistence type="inferred from homology"/>
<evidence type="ECO:0000255" key="1">
    <source>
        <dbReference type="HAMAP-Rule" id="MF_01363"/>
    </source>
</evidence>
<evidence type="ECO:0000305" key="2"/>
<sequence>MYAIVKAGGHQEKVEVGDTILVNRLDAKNGETVEFPVALVVDGEKVIIAAADLAKISVKAEVVNDDAKGPKIRIQKFKNKTGVARRKGHRQKLTQLKITAIA</sequence>
<protein>
    <recommendedName>
        <fullName evidence="1">Large ribosomal subunit protein bL21</fullName>
    </recommendedName>
    <alternativeName>
        <fullName evidence="2">50S ribosomal protein L21</fullName>
    </alternativeName>
</protein>
<accession>B8DVT9</accession>
<feature type="chain" id="PRO_1000166703" description="Large ribosomal subunit protein bL21">
    <location>
        <begin position="1"/>
        <end position="102"/>
    </location>
</feature>
<reference key="1">
    <citation type="journal article" date="2009" name="J. Bacteriol.">
        <title>Genome sequence of the probiotic bacterium Bifidobacterium animalis subsp. lactis AD011.</title>
        <authorList>
            <person name="Kim J.F."/>
            <person name="Jeong H."/>
            <person name="Yu D.S."/>
            <person name="Choi S.-H."/>
            <person name="Hur C.-G."/>
            <person name="Park M.-S."/>
            <person name="Yoon S.H."/>
            <person name="Kim D.-W."/>
            <person name="Ji G.E."/>
            <person name="Park H.-S."/>
            <person name="Oh T.K."/>
        </authorList>
    </citation>
    <scope>NUCLEOTIDE SEQUENCE [LARGE SCALE GENOMIC DNA]</scope>
    <source>
        <strain>AD011</strain>
    </source>
</reference>
<gene>
    <name evidence="1" type="primary">rplU</name>
    <name type="ordered locus">BLA_0288</name>
</gene>
<name>RL21_BIFA0</name>
<keyword id="KW-1185">Reference proteome</keyword>
<keyword id="KW-0687">Ribonucleoprotein</keyword>
<keyword id="KW-0689">Ribosomal protein</keyword>
<keyword id="KW-0694">RNA-binding</keyword>
<keyword id="KW-0699">rRNA-binding</keyword>
<organism>
    <name type="scientific">Bifidobacterium animalis subsp. lactis (strain AD011)</name>
    <dbReference type="NCBI Taxonomy" id="442563"/>
    <lineage>
        <taxon>Bacteria</taxon>
        <taxon>Bacillati</taxon>
        <taxon>Actinomycetota</taxon>
        <taxon>Actinomycetes</taxon>
        <taxon>Bifidobacteriales</taxon>
        <taxon>Bifidobacteriaceae</taxon>
        <taxon>Bifidobacterium</taxon>
    </lineage>
</organism>